<keyword id="KW-0378">Hydrolase</keyword>
<keyword id="KW-0460">Magnesium</keyword>
<keyword id="KW-0479">Metal-binding</keyword>
<keyword id="KW-0546">Nucleotide metabolism</keyword>
<keyword id="KW-0547">Nucleotide-binding</keyword>
<dbReference type="EC" id="3.6.1.66" evidence="1"/>
<dbReference type="EMBL" id="AE003849">
    <property type="protein sequence ID" value="AAF84315.1"/>
    <property type="status" value="ALT_INIT"/>
    <property type="molecule type" value="Genomic_DNA"/>
</dbReference>
<dbReference type="PIR" id="D82673">
    <property type="entry name" value="D82673"/>
</dbReference>
<dbReference type="SMR" id="Q9PD73"/>
<dbReference type="STRING" id="160492.XF_1506"/>
<dbReference type="KEGG" id="xfa:XF_1506"/>
<dbReference type="eggNOG" id="COG0127">
    <property type="taxonomic scope" value="Bacteria"/>
</dbReference>
<dbReference type="HOGENOM" id="CLU_082080_0_3_6"/>
<dbReference type="Proteomes" id="UP000000812">
    <property type="component" value="Chromosome"/>
</dbReference>
<dbReference type="GO" id="GO:0005829">
    <property type="term" value="C:cytosol"/>
    <property type="evidence" value="ECO:0007669"/>
    <property type="project" value="TreeGrafter"/>
</dbReference>
<dbReference type="GO" id="GO:0035870">
    <property type="term" value="F:dITP diphosphatase activity"/>
    <property type="evidence" value="ECO:0007669"/>
    <property type="project" value="RHEA"/>
</dbReference>
<dbReference type="GO" id="GO:0036220">
    <property type="term" value="F:ITP diphosphatase activity"/>
    <property type="evidence" value="ECO:0007669"/>
    <property type="project" value="UniProtKB-EC"/>
</dbReference>
<dbReference type="GO" id="GO:0046872">
    <property type="term" value="F:metal ion binding"/>
    <property type="evidence" value="ECO:0007669"/>
    <property type="project" value="UniProtKB-KW"/>
</dbReference>
<dbReference type="GO" id="GO:0000166">
    <property type="term" value="F:nucleotide binding"/>
    <property type="evidence" value="ECO:0007669"/>
    <property type="project" value="UniProtKB-KW"/>
</dbReference>
<dbReference type="GO" id="GO:0017111">
    <property type="term" value="F:ribonucleoside triphosphate phosphatase activity"/>
    <property type="evidence" value="ECO:0007669"/>
    <property type="project" value="InterPro"/>
</dbReference>
<dbReference type="GO" id="GO:0036222">
    <property type="term" value="F:XTP diphosphatase activity"/>
    <property type="evidence" value="ECO:0007669"/>
    <property type="project" value="RHEA"/>
</dbReference>
<dbReference type="GO" id="GO:0009117">
    <property type="term" value="P:nucleotide metabolic process"/>
    <property type="evidence" value="ECO:0007669"/>
    <property type="project" value="UniProtKB-KW"/>
</dbReference>
<dbReference type="GO" id="GO:0009146">
    <property type="term" value="P:purine nucleoside triphosphate catabolic process"/>
    <property type="evidence" value="ECO:0007669"/>
    <property type="project" value="UniProtKB-UniRule"/>
</dbReference>
<dbReference type="CDD" id="cd00515">
    <property type="entry name" value="HAM1"/>
    <property type="match status" value="1"/>
</dbReference>
<dbReference type="FunFam" id="3.90.950.10:FF:000001">
    <property type="entry name" value="dITP/XTP pyrophosphatase"/>
    <property type="match status" value="1"/>
</dbReference>
<dbReference type="Gene3D" id="3.90.950.10">
    <property type="match status" value="1"/>
</dbReference>
<dbReference type="HAMAP" id="MF_01405">
    <property type="entry name" value="Non_canon_purine_NTPase"/>
    <property type="match status" value="1"/>
</dbReference>
<dbReference type="InterPro" id="IPR020922">
    <property type="entry name" value="dITP/XTP_pyrophosphatase"/>
</dbReference>
<dbReference type="InterPro" id="IPR029001">
    <property type="entry name" value="ITPase-like_fam"/>
</dbReference>
<dbReference type="InterPro" id="IPR002637">
    <property type="entry name" value="RdgB/HAM1"/>
</dbReference>
<dbReference type="NCBIfam" id="TIGR00042">
    <property type="entry name" value="RdgB/HAM1 family non-canonical purine NTP pyrophosphatase"/>
    <property type="match status" value="1"/>
</dbReference>
<dbReference type="PANTHER" id="PTHR11067:SF9">
    <property type="entry name" value="INOSINE TRIPHOSPHATE PYROPHOSPHATASE"/>
    <property type="match status" value="1"/>
</dbReference>
<dbReference type="PANTHER" id="PTHR11067">
    <property type="entry name" value="INOSINE TRIPHOSPHATE PYROPHOSPHATASE/HAM1 PROTEIN"/>
    <property type="match status" value="1"/>
</dbReference>
<dbReference type="Pfam" id="PF01725">
    <property type="entry name" value="Ham1p_like"/>
    <property type="match status" value="1"/>
</dbReference>
<dbReference type="SUPFAM" id="SSF52972">
    <property type="entry name" value="ITPase-like"/>
    <property type="match status" value="1"/>
</dbReference>
<protein>
    <recommendedName>
        <fullName evidence="1">dITP/XTP pyrophosphatase</fullName>
        <ecNumber evidence="1">3.6.1.66</ecNumber>
    </recommendedName>
    <alternativeName>
        <fullName evidence="1">Non-canonical purine NTP pyrophosphatase</fullName>
    </alternativeName>
    <alternativeName>
        <fullName evidence="1">Non-standard purine NTP pyrophosphatase</fullName>
    </alternativeName>
    <alternativeName>
        <fullName evidence="1">Nucleoside-triphosphate diphosphatase</fullName>
    </alternativeName>
    <alternativeName>
        <fullName evidence="1">Nucleoside-triphosphate pyrophosphatase</fullName>
        <shortName evidence="1">NTPase</shortName>
    </alternativeName>
</protein>
<comment type="function">
    <text evidence="1">Pyrophosphatase that catalyzes the hydrolysis of nucleoside triphosphates to their monophosphate derivatives, with a high preference for the non-canonical purine nucleotides XTP (xanthosine triphosphate), dITP (deoxyinosine triphosphate) and ITP. Seems to function as a house-cleaning enzyme that removes non-canonical purine nucleotides from the nucleotide pool, thus preventing their incorporation into DNA/RNA and avoiding chromosomal lesions.</text>
</comment>
<comment type="catalytic activity">
    <reaction evidence="1">
        <text>XTP + H2O = XMP + diphosphate + H(+)</text>
        <dbReference type="Rhea" id="RHEA:28610"/>
        <dbReference type="ChEBI" id="CHEBI:15377"/>
        <dbReference type="ChEBI" id="CHEBI:15378"/>
        <dbReference type="ChEBI" id="CHEBI:33019"/>
        <dbReference type="ChEBI" id="CHEBI:57464"/>
        <dbReference type="ChEBI" id="CHEBI:61314"/>
        <dbReference type="EC" id="3.6.1.66"/>
    </reaction>
</comment>
<comment type="catalytic activity">
    <reaction evidence="1">
        <text>dITP + H2O = dIMP + diphosphate + H(+)</text>
        <dbReference type="Rhea" id="RHEA:28342"/>
        <dbReference type="ChEBI" id="CHEBI:15377"/>
        <dbReference type="ChEBI" id="CHEBI:15378"/>
        <dbReference type="ChEBI" id="CHEBI:33019"/>
        <dbReference type="ChEBI" id="CHEBI:61194"/>
        <dbReference type="ChEBI" id="CHEBI:61382"/>
        <dbReference type="EC" id="3.6.1.66"/>
    </reaction>
</comment>
<comment type="catalytic activity">
    <reaction evidence="1">
        <text>ITP + H2O = IMP + diphosphate + H(+)</text>
        <dbReference type="Rhea" id="RHEA:29399"/>
        <dbReference type="ChEBI" id="CHEBI:15377"/>
        <dbReference type="ChEBI" id="CHEBI:15378"/>
        <dbReference type="ChEBI" id="CHEBI:33019"/>
        <dbReference type="ChEBI" id="CHEBI:58053"/>
        <dbReference type="ChEBI" id="CHEBI:61402"/>
        <dbReference type="EC" id="3.6.1.66"/>
    </reaction>
</comment>
<comment type="cofactor">
    <cofactor evidence="1">
        <name>Mg(2+)</name>
        <dbReference type="ChEBI" id="CHEBI:18420"/>
    </cofactor>
    <text evidence="1">Binds 1 Mg(2+) ion per subunit.</text>
</comment>
<comment type="subunit">
    <text evidence="1">Homodimer.</text>
</comment>
<comment type="similarity">
    <text evidence="1">Belongs to the HAM1 NTPase family.</text>
</comment>
<comment type="sequence caution" evidence="2">
    <conflict type="erroneous initiation">
        <sequence resource="EMBL-CDS" id="AAF84315"/>
    </conflict>
</comment>
<sequence length="199" mass="21238">MKQLVLASGNAGKLGELRAMLAGVALQITAQSEFGVQDVPETGLTFIENALIKARHACLMTGFPALADDSGLIVDALGGAPGLYSARYAGTPTDAAANNAKLLEMLRDVPVGRRSARFYAVIVLLRHAEDPQPLIADGCWEGEIVFEPCGSGGFGYNPIFFDPLYGMTAAQMGAELKNKISHRARALEQLRDCLHTFMA</sequence>
<evidence type="ECO:0000255" key="1">
    <source>
        <dbReference type="HAMAP-Rule" id="MF_01405"/>
    </source>
</evidence>
<evidence type="ECO:0000305" key="2"/>
<name>IXTPA_XYLFA</name>
<proteinExistence type="inferred from homology"/>
<gene>
    <name type="ordered locus">XF_1506</name>
</gene>
<feature type="chain" id="PRO_0000178269" description="dITP/XTP pyrophosphatase">
    <location>
        <begin position="1"/>
        <end position="199"/>
    </location>
</feature>
<feature type="active site" description="Proton acceptor" evidence="1">
    <location>
        <position position="69"/>
    </location>
</feature>
<feature type="binding site" evidence="1">
    <location>
        <begin position="8"/>
        <end position="13"/>
    </location>
    <ligand>
        <name>substrate</name>
    </ligand>
</feature>
<feature type="binding site" evidence="1">
    <location>
        <position position="69"/>
    </location>
    <ligand>
        <name>Mg(2+)</name>
        <dbReference type="ChEBI" id="CHEBI:18420"/>
    </ligand>
</feature>
<feature type="binding site" evidence="1">
    <location>
        <position position="70"/>
    </location>
    <ligand>
        <name>substrate</name>
    </ligand>
</feature>
<feature type="binding site" evidence="1">
    <location>
        <begin position="154"/>
        <end position="157"/>
    </location>
    <ligand>
        <name>substrate</name>
    </ligand>
</feature>
<feature type="binding site" evidence="1">
    <location>
        <position position="177"/>
    </location>
    <ligand>
        <name>substrate</name>
    </ligand>
</feature>
<feature type="binding site" evidence="1">
    <location>
        <begin position="182"/>
        <end position="183"/>
    </location>
    <ligand>
        <name>substrate</name>
    </ligand>
</feature>
<accession>Q9PD73</accession>
<organism>
    <name type="scientific">Xylella fastidiosa (strain 9a5c)</name>
    <dbReference type="NCBI Taxonomy" id="160492"/>
    <lineage>
        <taxon>Bacteria</taxon>
        <taxon>Pseudomonadati</taxon>
        <taxon>Pseudomonadota</taxon>
        <taxon>Gammaproteobacteria</taxon>
        <taxon>Lysobacterales</taxon>
        <taxon>Lysobacteraceae</taxon>
        <taxon>Xylella</taxon>
    </lineage>
</organism>
<reference key="1">
    <citation type="journal article" date="2000" name="Nature">
        <title>The genome sequence of the plant pathogen Xylella fastidiosa.</title>
        <authorList>
            <person name="Simpson A.J.G."/>
            <person name="Reinach F.C."/>
            <person name="Arruda P."/>
            <person name="Abreu F.A."/>
            <person name="Acencio M."/>
            <person name="Alvarenga R."/>
            <person name="Alves L.M.C."/>
            <person name="Araya J.E."/>
            <person name="Baia G.S."/>
            <person name="Baptista C.S."/>
            <person name="Barros M.H."/>
            <person name="Bonaccorsi E.D."/>
            <person name="Bordin S."/>
            <person name="Bove J.M."/>
            <person name="Briones M.R.S."/>
            <person name="Bueno M.R.P."/>
            <person name="Camargo A.A."/>
            <person name="Camargo L.E.A."/>
            <person name="Carraro D.M."/>
            <person name="Carrer H."/>
            <person name="Colauto N.B."/>
            <person name="Colombo C."/>
            <person name="Costa F.F."/>
            <person name="Costa M.C.R."/>
            <person name="Costa-Neto C.M."/>
            <person name="Coutinho L.L."/>
            <person name="Cristofani M."/>
            <person name="Dias-Neto E."/>
            <person name="Docena C."/>
            <person name="El-Dorry H."/>
            <person name="Facincani A.P."/>
            <person name="Ferreira A.J.S."/>
            <person name="Ferreira V.C.A."/>
            <person name="Ferro J.A."/>
            <person name="Fraga J.S."/>
            <person name="Franca S.C."/>
            <person name="Franco M.C."/>
            <person name="Frohme M."/>
            <person name="Furlan L.R."/>
            <person name="Garnier M."/>
            <person name="Goldman G.H."/>
            <person name="Goldman M.H.S."/>
            <person name="Gomes S.L."/>
            <person name="Gruber A."/>
            <person name="Ho P.L."/>
            <person name="Hoheisel J.D."/>
            <person name="Junqueira M.L."/>
            <person name="Kemper E.L."/>
            <person name="Kitajima J.P."/>
            <person name="Krieger J.E."/>
            <person name="Kuramae E.E."/>
            <person name="Laigret F."/>
            <person name="Lambais M.R."/>
            <person name="Leite L.C.C."/>
            <person name="Lemos E.G.M."/>
            <person name="Lemos M.V.F."/>
            <person name="Lopes S.A."/>
            <person name="Lopes C.R."/>
            <person name="Machado J.A."/>
            <person name="Machado M.A."/>
            <person name="Madeira A.M.B.N."/>
            <person name="Madeira H.M.F."/>
            <person name="Marino C.L."/>
            <person name="Marques M.V."/>
            <person name="Martins E.A.L."/>
            <person name="Martins E.M.F."/>
            <person name="Matsukuma A.Y."/>
            <person name="Menck C.F.M."/>
            <person name="Miracca E.C."/>
            <person name="Miyaki C.Y."/>
            <person name="Monteiro-Vitorello C.B."/>
            <person name="Moon D.H."/>
            <person name="Nagai M.A."/>
            <person name="Nascimento A.L.T.O."/>
            <person name="Netto L.E.S."/>
            <person name="Nhani A. Jr."/>
            <person name="Nobrega F.G."/>
            <person name="Nunes L.R."/>
            <person name="Oliveira M.A."/>
            <person name="de Oliveira M.C."/>
            <person name="de Oliveira R.C."/>
            <person name="Palmieri D.A."/>
            <person name="Paris A."/>
            <person name="Peixoto B.R."/>
            <person name="Pereira G.A.G."/>
            <person name="Pereira H.A. Jr."/>
            <person name="Pesquero J.B."/>
            <person name="Quaggio R.B."/>
            <person name="Roberto P.G."/>
            <person name="Rodrigues V."/>
            <person name="de Rosa A.J.M."/>
            <person name="de Rosa V.E. Jr."/>
            <person name="de Sa R.G."/>
            <person name="Santelli R.V."/>
            <person name="Sawasaki H.E."/>
            <person name="da Silva A.C.R."/>
            <person name="da Silva A.M."/>
            <person name="da Silva F.R."/>
            <person name="Silva W.A. Jr."/>
            <person name="da Silveira J.F."/>
            <person name="Silvestri M.L.Z."/>
            <person name="Siqueira W.J."/>
            <person name="de Souza A.A."/>
            <person name="de Souza A.P."/>
            <person name="Terenzi M.F."/>
            <person name="Truffi D."/>
            <person name="Tsai S.M."/>
            <person name="Tsuhako M.H."/>
            <person name="Vallada H."/>
            <person name="Van Sluys M.A."/>
            <person name="Verjovski-Almeida S."/>
            <person name="Vettore A.L."/>
            <person name="Zago M.A."/>
            <person name="Zatz M."/>
            <person name="Meidanis J."/>
            <person name="Setubal J.C."/>
        </authorList>
    </citation>
    <scope>NUCLEOTIDE SEQUENCE [LARGE SCALE GENOMIC DNA]</scope>
    <source>
        <strain>9a5c</strain>
    </source>
</reference>